<sequence length="381" mass="42578">MSGQDKASQRVLCAMSGGVDSSVTAALLKDAGYQVIGAMMRFWPDDKRVDTFDTCCSPDAAYEARRVAEQVGVPFYLLDYREQFQHHIVGPFLSEYAQGRTPNPCVNCNTKVKFDELVKKAKMLGCRYVATGHYVKRVEREDGSVEFHRGDDPRKDQTYFLWGTPREALPFILFPVGELEKPRVREIAAEKGLLTARKPESQNICFVPGKVQDFVAEHLPQRQGLIREIRTGEVVGEHLGTQFYTLGQKKGLGLYQTHRVRHVVHLDPETNTVWVGDYEDCLWTGLKAEGANYLLDLAELPREVEVQVRYRTKPVRATVLHADEHGFELQFEEPQFAVAPGQSAVLYAGTRLLGGGLIADHARNLPVVPADQAAQPVPVSG</sequence>
<keyword id="KW-0067">ATP-binding</keyword>
<keyword id="KW-0963">Cytoplasm</keyword>
<keyword id="KW-1015">Disulfide bond</keyword>
<keyword id="KW-0547">Nucleotide-binding</keyword>
<keyword id="KW-0694">RNA-binding</keyword>
<keyword id="KW-0808">Transferase</keyword>
<keyword id="KW-0819">tRNA processing</keyword>
<keyword id="KW-0820">tRNA-binding</keyword>
<protein>
    <recommendedName>
        <fullName evidence="1">tRNA-specific 2-thiouridylase MnmA</fullName>
        <ecNumber evidence="1">2.8.1.13</ecNumber>
    </recommendedName>
</protein>
<feature type="chain" id="PRO_0000349609" description="tRNA-specific 2-thiouridylase MnmA">
    <location>
        <begin position="1"/>
        <end position="381"/>
    </location>
</feature>
<feature type="region of interest" description="Interaction with tRNA" evidence="1">
    <location>
        <begin position="155"/>
        <end position="157"/>
    </location>
</feature>
<feature type="region of interest" description="Interaction with tRNA" evidence="1">
    <location>
        <begin position="309"/>
        <end position="310"/>
    </location>
</feature>
<feature type="active site" description="Nucleophile" evidence="1">
    <location>
        <position position="108"/>
    </location>
</feature>
<feature type="active site" description="Cysteine persulfide intermediate" evidence="1">
    <location>
        <position position="205"/>
    </location>
</feature>
<feature type="binding site" evidence="1">
    <location>
        <begin position="14"/>
        <end position="21"/>
    </location>
    <ligand>
        <name>ATP</name>
        <dbReference type="ChEBI" id="CHEBI:30616"/>
    </ligand>
</feature>
<feature type="binding site" evidence="1">
    <location>
        <position position="40"/>
    </location>
    <ligand>
        <name>ATP</name>
        <dbReference type="ChEBI" id="CHEBI:30616"/>
    </ligand>
</feature>
<feature type="binding site" evidence="1">
    <location>
        <position position="132"/>
    </location>
    <ligand>
        <name>ATP</name>
        <dbReference type="ChEBI" id="CHEBI:30616"/>
    </ligand>
</feature>
<feature type="site" description="Interaction with tRNA" evidence="1">
    <location>
        <position position="133"/>
    </location>
</feature>
<feature type="site" description="Interaction with tRNA" evidence="1">
    <location>
        <position position="342"/>
    </location>
</feature>
<feature type="disulfide bond" description="Alternate" evidence="1">
    <location>
        <begin position="108"/>
        <end position="205"/>
    </location>
</feature>
<proteinExistence type="inferred from homology"/>
<organism>
    <name type="scientific">Deinococcus geothermalis (strain DSM 11300 / CIP 105573 / AG-3a)</name>
    <dbReference type="NCBI Taxonomy" id="319795"/>
    <lineage>
        <taxon>Bacteria</taxon>
        <taxon>Thermotogati</taxon>
        <taxon>Deinococcota</taxon>
        <taxon>Deinococci</taxon>
        <taxon>Deinococcales</taxon>
        <taxon>Deinococcaceae</taxon>
        <taxon>Deinococcus</taxon>
    </lineage>
</organism>
<gene>
    <name evidence="1" type="primary">mnmA</name>
    <name type="ordered locus">Dgeo_0792</name>
</gene>
<comment type="function">
    <text evidence="1">Catalyzes the 2-thiolation of uridine at the wobble position (U34) of tRNA, leading to the formation of s(2)U34.</text>
</comment>
<comment type="catalytic activity">
    <reaction evidence="1">
        <text>S-sulfanyl-L-cysteinyl-[protein] + uridine(34) in tRNA + AH2 + ATP = 2-thiouridine(34) in tRNA + L-cysteinyl-[protein] + A + AMP + diphosphate + H(+)</text>
        <dbReference type="Rhea" id="RHEA:47032"/>
        <dbReference type="Rhea" id="RHEA-COMP:10131"/>
        <dbReference type="Rhea" id="RHEA-COMP:11726"/>
        <dbReference type="Rhea" id="RHEA-COMP:11727"/>
        <dbReference type="Rhea" id="RHEA-COMP:11728"/>
        <dbReference type="ChEBI" id="CHEBI:13193"/>
        <dbReference type="ChEBI" id="CHEBI:15378"/>
        <dbReference type="ChEBI" id="CHEBI:17499"/>
        <dbReference type="ChEBI" id="CHEBI:29950"/>
        <dbReference type="ChEBI" id="CHEBI:30616"/>
        <dbReference type="ChEBI" id="CHEBI:33019"/>
        <dbReference type="ChEBI" id="CHEBI:61963"/>
        <dbReference type="ChEBI" id="CHEBI:65315"/>
        <dbReference type="ChEBI" id="CHEBI:87170"/>
        <dbReference type="ChEBI" id="CHEBI:456215"/>
        <dbReference type="EC" id="2.8.1.13"/>
    </reaction>
</comment>
<comment type="subcellular location">
    <subcellularLocation>
        <location evidence="1">Cytoplasm</location>
    </subcellularLocation>
</comment>
<comment type="similarity">
    <text evidence="1">Belongs to the MnmA/TRMU family.</text>
</comment>
<evidence type="ECO:0000255" key="1">
    <source>
        <dbReference type="HAMAP-Rule" id="MF_00144"/>
    </source>
</evidence>
<reference key="1">
    <citation type="submission" date="2006-04" db="EMBL/GenBank/DDBJ databases">
        <title>Complete sequence of chromosome of Deinococcus geothermalis DSM 11300.</title>
        <authorList>
            <person name="Copeland A."/>
            <person name="Lucas S."/>
            <person name="Lapidus A."/>
            <person name="Barry K."/>
            <person name="Detter J.C."/>
            <person name="Glavina del Rio T."/>
            <person name="Hammon N."/>
            <person name="Israni S."/>
            <person name="Dalin E."/>
            <person name="Tice H."/>
            <person name="Pitluck S."/>
            <person name="Brettin T."/>
            <person name="Bruce D."/>
            <person name="Han C."/>
            <person name="Tapia R."/>
            <person name="Saunders E."/>
            <person name="Gilna P."/>
            <person name="Schmutz J."/>
            <person name="Larimer F."/>
            <person name="Land M."/>
            <person name="Hauser L."/>
            <person name="Kyrpides N."/>
            <person name="Kim E."/>
            <person name="Daly M.J."/>
            <person name="Fredrickson J.K."/>
            <person name="Makarova K.S."/>
            <person name="Gaidamakova E.K."/>
            <person name="Zhai M."/>
            <person name="Richardson P."/>
        </authorList>
    </citation>
    <scope>NUCLEOTIDE SEQUENCE [LARGE SCALE GENOMIC DNA]</scope>
    <source>
        <strain>DSM 11300 / CIP 105573 / AG-3a</strain>
    </source>
</reference>
<name>MNMA_DEIGD</name>
<dbReference type="EC" id="2.8.1.13" evidence="1"/>
<dbReference type="EMBL" id="CP000359">
    <property type="protein sequence ID" value="ABF45094.1"/>
    <property type="molecule type" value="Genomic_DNA"/>
</dbReference>
<dbReference type="RefSeq" id="WP_011529935.1">
    <property type="nucleotide sequence ID" value="NC_008025.1"/>
</dbReference>
<dbReference type="SMR" id="Q1J090"/>
<dbReference type="STRING" id="319795.Dgeo_0792"/>
<dbReference type="KEGG" id="dge:Dgeo_0792"/>
<dbReference type="eggNOG" id="COG0482">
    <property type="taxonomic scope" value="Bacteria"/>
</dbReference>
<dbReference type="HOGENOM" id="CLU_035188_0_0_0"/>
<dbReference type="Proteomes" id="UP000002431">
    <property type="component" value="Chromosome"/>
</dbReference>
<dbReference type="GO" id="GO:0005737">
    <property type="term" value="C:cytoplasm"/>
    <property type="evidence" value="ECO:0007669"/>
    <property type="project" value="UniProtKB-SubCell"/>
</dbReference>
<dbReference type="GO" id="GO:0005524">
    <property type="term" value="F:ATP binding"/>
    <property type="evidence" value="ECO:0007669"/>
    <property type="project" value="UniProtKB-KW"/>
</dbReference>
<dbReference type="GO" id="GO:0000049">
    <property type="term" value="F:tRNA binding"/>
    <property type="evidence" value="ECO:0007669"/>
    <property type="project" value="UniProtKB-KW"/>
</dbReference>
<dbReference type="GO" id="GO:0103016">
    <property type="term" value="F:tRNA-uridine 2-sulfurtransferase activity"/>
    <property type="evidence" value="ECO:0007669"/>
    <property type="project" value="UniProtKB-EC"/>
</dbReference>
<dbReference type="GO" id="GO:0002143">
    <property type="term" value="P:tRNA wobble position uridine thiolation"/>
    <property type="evidence" value="ECO:0007669"/>
    <property type="project" value="TreeGrafter"/>
</dbReference>
<dbReference type="CDD" id="cd01998">
    <property type="entry name" value="MnmA_TRMU-like"/>
    <property type="match status" value="1"/>
</dbReference>
<dbReference type="FunFam" id="2.40.30.10:FF:000023">
    <property type="entry name" value="tRNA-specific 2-thiouridylase MnmA"/>
    <property type="match status" value="1"/>
</dbReference>
<dbReference type="FunFam" id="3.40.50.620:FF:000115">
    <property type="entry name" value="tRNA-specific 2-thiouridylase MnmA"/>
    <property type="match status" value="1"/>
</dbReference>
<dbReference type="Gene3D" id="2.30.30.280">
    <property type="entry name" value="Adenine nucleotide alpha hydrolases-like domains"/>
    <property type="match status" value="1"/>
</dbReference>
<dbReference type="Gene3D" id="3.40.50.620">
    <property type="entry name" value="HUPs"/>
    <property type="match status" value="1"/>
</dbReference>
<dbReference type="Gene3D" id="2.40.30.10">
    <property type="entry name" value="Translation factors"/>
    <property type="match status" value="1"/>
</dbReference>
<dbReference type="HAMAP" id="MF_00144">
    <property type="entry name" value="tRNA_thiouridyl_MnmA"/>
    <property type="match status" value="1"/>
</dbReference>
<dbReference type="InterPro" id="IPR004506">
    <property type="entry name" value="MnmA-like"/>
</dbReference>
<dbReference type="InterPro" id="IPR046885">
    <property type="entry name" value="MnmA-like_C"/>
</dbReference>
<dbReference type="InterPro" id="IPR046884">
    <property type="entry name" value="MnmA-like_central"/>
</dbReference>
<dbReference type="InterPro" id="IPR023382">
    <property type="entry name" value="MnmA-like_central_sf"/>
</dbReference>
<dbReference type="InterPro" id="IPR014729">
    <property type="entry name" value="Rossmann-like_a/b/a_fold"/>
</dbReference>
<dbReference type="NCBIfam" id="NF001138">
    <property type="entry name" value="PRK00143.1"/>
    <property type="match status" value="1"/>
</dbReference>
<dbReference type="NCBIfam" id="TIGR00420">
    <property type="entry name" value="trmU"/>
    <property type="match status" value="1"/>
</dbReference>
<dbReference type="PANTHER" id="PTHR11933:SF5">
    <property type="entry name" value="MITOCHONDRIAL TRNA-SPECIFIC 2-THIOURIDYLASE 1"/>
    <property type="match status" value="1"/>
</dbReference>
<dbReference type="PANTHER" id="PTHR11933">
    <property type="entry name" value="TRNA 5-METHYLAMINOMETHYL-2-THIOURIDYLATE -METHYLTRANSFERASE"/>
    <property type="match status" value="1"/>
</dbReference>
<dbReference type="Pfam" id="PF03054">
    <property type="entry name" value="tRNA_Me_trans"/>
    <property type="match status" value="1"/>
</dbReference>
<dbReference type="Pfam" id="PF20258">
    <property type="entry name" value="tRNA_Me_trans_C"/>
    <property type="match status" value="1"/>
</dbReference>
<dbReference type="Pfam" id="PF20259">
    <property type="entry name" value="tRNA_Me_trans_M"/>
    <property type="match status" value="1"/>
</dbReference>
<dbReference type="SUPFAM" id="SSF52402">
    <property type="entry name" value="Adenine nucleotide alpha hydrolases-like"/>
    <property type="match status" value="1"/>
</dbReference>
<accession>Q1J090</accession>